<sequence>MSHTILLVQPGRNPETRTYSDYESVNECMEGVCKIYEEHLKRRNPNTPTITYDISQLFDFVDQLADLSCLVYQKSTNTYAPYNKEWIKEKIYVLLRQAAGTTD</sequence>
<protein>
    <recommendedName>
        <fullName>Enhancer of rudimentary homolog</fullName>
    </recommendedName>
</protein>
<keyword id="KW-0131">Cell cycle</keyword>
<keyword id="KW-1185">Reference proteome</keyword>
<evidence type="ECO:0000250" key="1"/>
<evidence type="ECO:0000269" key="2">
    <source>
    </source>
</evidence>
<evidence type="ECO:0000305" key="3"/>
<accession>Q93104</accession>
<reference key="1">
    <citation type="journal article" date="1997" name="Gene">
        <title>The putative cell cycle gene, enhancer of rudimentary, encodes a highly conserved protein found in plants and animals.</title>
        <authorList>
            <person name="Gelsthorpe M."/>
            <person name="Pulumati M."/>
            <person name="McCallum C."/>
            <person name="Dang-Vu K."/>
            <person name="Tsubota S.I."/>
        </authorList>
    </citation>
    <scope>NUCLEOTIDE SEQUENCE [MRNA]</scope>
    <scope>FUNCTION</scope>
</reference>
<reference key="2">
    <citation type="journal article" date="2007" name="Science">
        <title>Genome sequence of Aedes aegypti, a major arbovirus vector.</title>
        <authorList>
            <person name="Nene V."/>
            <person name="Wortman J.R."/>
            <person name="Lawson D."/>
            <person name="Haas B.J."/>
            <person name="Kodira C.D."/>
            <person name="Tu Z.J."/>
            <person name="Loftus B.J."/>
            <person name="Xi Z."/>
            <person name="Megy K."/>
            <person name="Grabherr M."/>
            <person name="Ren Q."/>
            <person name="Zdobnov E.M."/>
            <person name="Lobo N.F."/>
            <person name="Campbell K.S."/>
            <person name="Brown S.E."/>
            <person name="Bonaldo M.F."/>
            <person name="Zhu J."/>
            <person name="Sinkins S.P."/>
            <person name="Hogenkamp D.G."/>
            <person name="Amedeo P."/>
            <person name="Arensburger P."/>
            <person name="Atkinson P.W."/>
            <person name="Bidwell S.L."/>
            <person name="Biedler J."/>
            <person name="Birney E."/>
            <person name="Bruggner R.V."/>
            <person name="Costas J."/>
            <person name="Coy M.R."/>
            <person name="Crabtree J."/>
            <person name="Crawford M."/>
            <person name="DeBruyn B."/>
            <person name="DeCaprio D."/>
            <person name="Eiglmeier K."/>
            <person name="Eisenstadt E."/>
            <person name="El-Dorry H."/>
            <person name="Gelbart W.M."/>
            <person name="Gomes S.L."/>
            <person name="Hammond M."/>
            <person name="Hannick L.I."/>
            <person name="Hogan J.R."/>
            <person name="Holmes M.H."/>
            <person name="Jaffe D."/>
            <person name="Johnston S.J."/>
            <person name="Kennedy R.C."/>
            <person name="Koo H."/>
            <person name="Kravitz S."/>
            <person name="Kriventseva E.V."/>
            <person name="Kulp D."/>
            <person name="Labutti K."/>
            <person name="Lee E."/>
            <person name="Li S."/>
            <person name="Lovin D.D."/>
            <person name="Mao C."/>
            <person name="Mauceli E."/>
            <person name="Menck C.F."/>
            <person name="Miller J.R."/>
            <person name="Montgomery P."/>
            <person name="Mori A."/>
            <person name="Nascimento A.L."/>
            <person name="Naveira H.F."/>
            <person name="Nusbaum C."/>
            <person name="O'Leary S.B."/>
            <person name="Orvis J."/>
            <person name="Pertea M."/>
            <person name="Quesneville H."/>
            <person name="Reidenbach K.R."/>
            <person name="Rogers Y.-H.C."/>
            <person name="Roth C.W."/>
            <person name="Schneider J.R."/>
            <person name="Schatz M."/>
            <person name="Shumway M."/>
            <person name="Stanke M."/>
            <person name="Stinson E.O."/>
            <person name="Tubio J.M.C."/>
            <person name="Vanzee J.P."/>
            <person name="Verjovski-Almeida S."/>
            <person name="Werner D."/>
            <person name="White O.R."/>
            <person name="Wyder S."/>
            <person name="Zeng Q."/>
            <person name="Zhao Q."/>
            <person name="Zhao Y."/>
            <person name="Hill C.A."/>
            <person name="Raikhel A.S."/>
            <person name="Soares M.B."/>
            <person name="Knudson D.L."/>
            <person name="Lee N.H."/>
            <person name="Galagan J."/>
            <person name="Salzberg S.L."/>
            <person name="Paulsen I.T."/>
            <person name="Dimopoulos G."/>
            <person name="Collins F.H."/>
            <person name="Bruce B."/>
            <person name="Fraser-Liggett C.M."/>
            <person name="Severson D.W."/>
        </authorList>
    </citation>
    <scope>NUCLEOTIDE SEQUENCE [LARGE SCALE GENOMIC DNA]</scope>
    <source>
        <strain>LVPib12</strain>
    </source>
</reference>
<name>ERH_AEDAE</name>
<dbReference type="EMBL" id="U66869">
    <property type="protein sequence ID" value="AAC47489.1"/>
    <property type="molecule type" value="mRNA"/>
</dbReference>
<dbReference type="EMBL" id="CH477756">
    <property type="status" value="NOT_ANNOTATED_CDS"/>
    <property type="molecule type" value="Genomic_DNA"/>
</dbReference>
<dbReference type="RefSeq" id="XP_021694723.1">
    <property type="nucleotide sequence ID" value="XM_021839031.1"/>
</dbReference>
<dbReference type="SMR" id="Q93104"/>
<dbReference type="FunCoup" id="Q93104">
    <property type="interactions" value="2402"/>
</dbReference>
<dbReference type="STRING" id="7159.Q93104"/>
<dbReference type="EnsemblMetazoa" id="AAEL021736-RA">
    <property type="protein sequence ID" value="AAEL021736-PA"/>
    <property type="gene ID" value="AAEL021736"/>
</dbReference>
<dbReference type="GeneID" id="110674760"/>
<dbReference type="VEuPathDB" id="VectorBase:AAEL021736"/>
<dbReference type="InParanoid" id="Q93104"/>
<dbReference type="OrthoDB" id="7887808at2759"/>
<dbReference type="Proteomes" id="UP000008820">
    <property type="component" value="Chromosome 1"/>
</dbReference>
<dbReference type="Proteomes" id="UP000682892">
    <property type="component" value="Chromosome 1"/>
</dbReference>
<dbReference type="FunFam" id="3.30.2260.10:FF:000001">
    <property type="entry name" value="Enhancer of rudimentary homolog"/>
    <property type="match status" value="1"/>
</dbReference>
<dbReference type="Gene3D" id="3.30.2260.10">
    <property type="entry name" value="Enhancer of rudimentary"/>
    <property type="match status" value="1"/>
</dbReference>
<dbReference type="InterPro" id="IPR035912">
    <property type="entry name" value="EHR_sf"/>
</dbReference>
<dbReference type="InterPro" id="IPR000781">
    <property type="entry name" value="ERH"/>
</dbReference>
<dbReference type="PANTHER" id="PTHR12373">
    <property type="entry name" value="ENHANCER OF RUDIMENTARY ERH"/>
    <property type="match status" value="1"/>
</dbReference>
<dbReference type="PANTHER" id="PTHR12373:SF0">
    <property type="entry name" value="ENHANCER OF RUDIMENTARY HOMOLOG"/>
    <property type="match status" value="1"/>
</dbReference>
<dbReference type="Pfam" id="PF01133">
    <property type="entry name" value="ER"/>
    <property type="match status" value="1"/>
</dbReference>
<dbReference type="PIRSF" id="PIRSF016393">
    <property type="entry name" value="Enh_rudimentary"/>
    <property type="match status" value="1"/>
</dbReference>
<dbReference type="SUPFAM" id="SSF143875">
    <property type="entry name" value="ERH-like"/>
    <property type="match status" value="1"/>
</dbReference>
<dbReference type="PROSITE" id="PS01290">
    <property type="entry name" value="ER"/>
    <property type="match status" value="1"/>
</dbReference>
<organism>
    <name type="scientific">Aedes aegypti</name>
    <name type="common">Yellowfever mosquito</name>
    <name type="synonym">Culex aegypti</name>
    <dbReference type="NCBI Taxonomy" id="7159"/>
    <lineage>
        <taxon>Eukaryota</taxon>
        <taxon>Metazoa</taxon>
        <taxon>Ecdysozoa</taxon>
        <taxon>Arthropoda</taxon>
        <taxon>Hexapoda</taxon>
        <taxon>Insecta</taxon>
        <taxon>Pterygota</taxon>
        <taxon>Neoptera</taxon>
        <taxon>Endopterygota</taxon>
        <taxon>Diptera</taxon>
        <taxon>Nematocera</taxon>
        <taxon>Culicoidea</taxon>
        <taxon>Culicidae</taxon>
        <taxon>Culicinae</taxon>
        <taxon>Aedini</taxon>
        <taxon>Aedes</taxon>
        <taxon>Stegomyia</taxon>
    </lineage>
</organism>
<feature type="chain" id="PRO_0000219350" description="Enhancer of rudimentary homolog">
    <location>
        <begin position="1"/>
        <end position="103"/>
    </location>
</feature>
<proteinExistence type="inferred from homology"/>
<comment type="function">
    <text evidence="2">May have a role in the cell cycle.</text>
</comment>
<comment type="subunit">
    <text evidence="1">Homodimer.</text>
</comment>
<comment type="similarity">
    <text evidence="3">Belongs to the E(R) family.</text>
</comment>